<proteinExistence type="inferred from homology"/>
<name>GPDA_OCEIH</name>
<evidence type="ECO:0000255" key="1">
    <source>
        <dbReference type="HAMAP-Rule" id="MF_00394"/>
    </source>
</evidence>
<dbReference type="EC" id="1.1.1.94" evidence="1"/>
<dbReference type="EMBL" id="BA000028">
    <property type="protein sequence ID" value="BAC13752.1"/>
    <property type="molecule type" value="Genomic_DNA"/>
</dbReference>
<dbReference type="RefSeq" id="WP_011066194.1">
    <property type="nucleotide sequence ID" value="NC_004193.1"/>
</dbReference>
<dbReference type="SMR" id="Q8EQA9"/>
<dbReference type="STRING" id="221109.gene:10734036"/>
<dbReference type="KEGG" id="oih:OB1796"/>
<dbReference type="eggNOG" id="COG0240">
    <property type="taxonomic scope" value="Bacteria"/>
</dbReference>
<dbReference type="HOGENOM" id="CLU_033449_0_2_9"/>
<dbReference type="OrthoDB" id="9812273at2"/>
<dbReference type="PhylomeDB" id="Q8EQA9"/>
<dbReference type="UniPathway" id="UPA00940"/>
<dbReference type="Proteomes" id="UP000000822">
    <property type="component" value="Chromosome"/>
</dbReference>
<dbReference type="GO" id="GO:0005829">
    <property type="term" value="C:cytosol"/>
    <property type="evidence" value="ECO:0007669"/>
    <property type="project" value="TreeGrafter"/>
</dbReference>
<dbReference type="GO" id="GO:0047952">
    <property type="term" value="F:glycerol-3-phosphate dehydrogenase [NAD(P)+] activity"/>
    <property type="evidence" value="ECO:0007669"/>
    <property type="project" value="UniProtKB-UniRule"/>
</dbReference>
<dbReference type="GO" id="GO:0051287">
    <property type="term" value="F:NAD binding"/>
    <property type="evidence" value="ECO:0007669"/>
    <property type="project" value="InterPro"/>
</dbReference>
<dbReference type="GO" id="GO:0005975">
    <property type="term" value="P:carbohydrate metabolic process"/>
    <property type="evidence" value="ECO:0007669"/>
    <property type="project" value="InterPro"/>
</dbReference>
<dbReference type="GO" id="GO:0046167">
    <property type="term" value="P:glycerol-3-phosphate biosynthetic process"/>
    <property type="evidence" value="ECO:0007669"/>
    <property type="project" value="UniProtKB-UniRule"/>
</dbReference>
<dbReference type="GO" id="GO:0046168">
    <property type="term" value="P:glycerol-3-phosphate catabolic process"/>
    <property type="evidence" value="ECO:0007669"/>
    <property type="project" value="InterPro"/>
</dbReference>
<dbReference type="GO" id="GO:0006650">
    <property type="term" value="P:glycerophospholipid metabolic process"/>
    <property type="evidence" value="ECO:0007669"/>
    <property type="project" value="UniProtKB-UniRule"/>
</dbReference>
<dbReference type="GO" id="GO:0008654">
    <property type="term" value="P:phospholipid biosynthetic process"/>
    <property type="evidence" value="ECO:0007669"/>
    <property type="project" value="UniProtKB-KW"/>
</dbReference>
<dbReference type="FunFam" id="1.10.1040.10:FF:000001">
    <property type="entry name" value="Glycerol-3-phosphate dehydrogenase [NAD(P)+]"/>
    <property type="match status" value="1"/>
</dbReference>
<dbReference type="FunFam" id="3.40.50.720:FF:000019">
    <property type="entry name" value="Glycerol-3-phosphate dehydrogenase [NAD(P)+]"/>
    <property type="match status" value="1"/>
</dbReference>
<dbReference type="Gene3D" id="1.10.1040.10">
    <property type="entry name" value="N-(1-d-carboxylethyl)-l-norvaline Dehydrogenase, domain 2"/>
    <property type="match status" value="1"/>
</dbReference>
<dbReference type="Gene3D" id="3.40.50.720">
    <property type="entry name" value="NAD(P)-binding Rossmann-like Domain"/>
    <property type="match status" value="1"/>
</dbReference>
<dbReference type="HAMAP" id="MF_00394">
    <property type="entry name" value="NAD_Glyc3P_dehydrog"/>
    <property type="match status" value="1"/>
</dbReference>
<dbReference type="InterPro" id="IPR008927">
    <property type="entry name" value="6-PGluconate_DH-like_C_sf"/>
</dbReference>
<dbReference type="InterPro" id="IPR013328">
    <property type="entry name" value="6PGD_dom2"/>
</dbReference>
<dbReference type="InterPro" id="IPR006168">
    <property type="entry name" value="G3P_DH_NAD-dep"/>
</dbReference>
<dbReference type="InterPro" id="IPR006109">
    <property type="entry name" value="G3P_DH_NAD-dep_C"/>
</dbReference>
<dbReference type="InterPro" id="IPR011128">
    <property type="entry name" value="G3P_DH_NAD-dep_N"/>
</dbReference>
<dbReference type="InterPro" id="IPR036291">
    <property type="entry name" value="NAD(P)-bd_dom_sf"/>
</dbReference>
<dbReference type="NCBIfam" id="NF000940">
    <property type="entry name" value="PRK00094.1-2"/>
    <property type="match status" value="1"/>
</dbReference>
<dbReference type="NCBIfam" id="NF000941">
    <property type="entry name" value="PRK00094.1-3"/>
    <property type="match status" value="1"/>
</dbReference>
<dbReference type="NCBIfam" id="NF000942">
    <property type="entry name" value="PRK00094.1-4"/>
    <property type="match status" value="1"/>
</dbReference>
<dbReference type="PANTHER" id="PTHR11728">
    <property type="entry name" value="GLYCEROL-3-PHOSPHATE DEHYDROGENASE"/>
    <property type="match status" value="1"/>
</dbReference>
<dbReference type="PANTHER" id="PTHR11728:SF1">
    <property type="entry name" value="GLYCEROL-3-PHOSPHATE DEHYDROGENASE [NAD(+)] 2, CHLOROPLASTIC"/>
    <property type="match status" value="1"/>
</dbReference>
<dbReference type="Pfam" id="PF07479">
    <property type="entry name" value="NAD_Gly3P_dh_C"/>
    <property type="match status" value="1"/>
</dbReference>
<dbReference type="Pfam" id="PF01210">
    <property type="entry name" value="NAD_Gly3P_dh_N"/>
    <property type="match status" value="1"/>
</dbReference>
<dbReference type="PIRSF" id="PIRSF000114">
    <property type="entry name" value="Glycerol-3-P_dh"/>
    <property type="match status" value="1"/>
</dbReference>
<dbReference type="PRINTS" id="PR00077">
    <property type="entry name" value="GPDHDRGNASE"/>
</dbReference>
<dbReference type="SUPFAM" id="SSF48179">
    <property type="entry name" value="6-phosphogluconate dehydrogenase C-terminal domain-like"/>
    <property type="match status" value="1"/>
</dbReference>
<dbReference type="SUPFAM" id="SSF51735">
    <property type="entry name" value="NAD(P)-binding Rossmann-fold domains"/>
    <property type="match status" value="1"/>
</dbReference>
<dbReference type="PROSITE" id="PS00957">
    <property type="entry name" value="NAD_G3PDH"/>
    <property type="match status" value="1"/>
</dbReference>
<feature type="chain" id="PRO_0000138002" description="Glycerol-3-phosphate dehydrogenase [NAD(P)+]">
    <location>
        <begin position="1"/>
        <end position="344"/>
    </location>
</feature>
<feature type="active site" description="Proton acceptor" evidence="1">
    <location>
        <position position="190"/>
    </location>
</feature>
<feature type="binding site" evidence="1">
    <location>
        <position position="11"/>
    </location>
    <ligand>
        <name>NADPH</name>
        <dbReference type="ChEBI" id="CHEBI:57783"/>
    </ligand>
</feature>
<feature type="binding site" evidence="1">
    <location>
        <position position="12"/>
    </location>
    <ligand>
        <name>NADPH</name>
        <dbReference type="ChEBI" id="CHEBI:57783"/>
    </ligand>
</feature>
<feature type="binding site" evidence="1">
    <location>
        <position position="32"/>
    </location>
    <ligand>
        <name>NADPH</name>
        <dbReference type="ChEBI" id="CHEBI:57783"/>
    </ligand>
</feature>
<feature type="binding site" evidence="1">
    <location>
        <position position="33"/>
    </location>
    <ligand>
        <name>NADPH</name>
        <dbReference type="ChEBI" id="CHEBI:57783"/>
    </ligand>
</feature>
<feature type="binding site" evidence="1">
    <location>
        <position position="105"/>
    </location>
    <ligand>
        <name>NADPH</name>
        <dbReference type="ChEBI" id="CHEBI:57783"/>
    </ligand>
</feature>
<feature type="binding site" evidence="1">
    <location>
        <position position="105"/>
    </location>
    <ligand>
        <name>sn-glycerol 3-phosphate</name>
        <dbReference type="ChEBI" id="CHEBI:57597"/>
    </ligand>
</feature>
<feature type="binding site" evidence="1">
    <location>
        <position position="135"/>
    </location>
    <ligand>
        <name>sn-glycerol 3-phosphate</name>
        <dbReference type="ChEBI" id="CHEBI:57597"/>
    </ligand>
</feature>
<feature type="binding site" evidence="1">
    <location>
        <position position="137"/>
    </location>
    <ligand>
        <name>sn-glycerol 3-phosphate</name>
        <dbReference type="ChEBI" id="CHEBI:57597"/>
    </ligand>
</feature>
<feature type="binding site" evidence="1">
    <location>
        <position position="139"/>
    </location>
    <ligand>
        <name>NADPH</name>
        <dbReference type="ChEBI" id="CHEBI:57783"/>
    </ligand>
</feature>
<feature type="binding site" evidence="1">
    <location>
        <position position="190"/>
    </location>
    <ligand>
        <name>sn-glycerol 3-phosphate</name>
        <dbReference type="ChEBI" id="CHEBI:57597"/>
    </ligand>
</feature>
<feature type="binding site" evidence="1">
    <location>
        <position position="243"/>
    </location>
    <ligand>
        <name>sn-glycerol 3-phosphate</name>
        <dbReference type="ChEBI" id="CHEBI:57597"/>
    </ligand>
</feature>
<feature type="binding site" evidence="1">
    <location>
        <position position="253"/>
    </location>
    <ligand>
        <name>sn-glycerol 3-phosphate</name>
        <dbReference type="ChEBI" id="CHEBI:57597"/>
    </ligand>
</feature>
<feature type="binding site" evidence="1">
    <location>
        <position position="254"/>
    </location>
    <ligand>
        <name>NADPH</name>
        <dbReference type="ChEBI" id="CHEBI:57783"/>
    </ligand>
</feature>
<feature type="binding site" evidence="1">
    <location>
        <position position="254"/>
    </location>
    <ligand>
        <name>sn-glycerol 3-phosphate</name>
        <dbReference type="ChEBI" id="CHEBI:57597"/>
    </ligand>
</feature>
<feature type="binding site" evidence="1">
    <location>
        <position position="255"/>
    </location>
    <ligand>
        <name>sn-glycerol 3-phosphate</name>
        <dbReference type="ChEBI" id="CHEBI:57597"/>
    </ligand>
</feature>
<feature type="binding site" evidence="1">
    <location>
        <position position="278"/>
    </location>
    <ligand>
        <name>NADPH</name>
        <dbReference type="ChEBI" id="CHEBI:57783"/>
    </ligand>
</feature>
<feature type="binding site" evidence="1">
    <location>
        <position position="280"/>
    </location>
    <ligand>
        <name>NADPH</name>
        <dbReference type="ChEBI" id="CHEBI:57783"/>
    </ligand>
</feature>
<comment type="function">
    <text evidence="1">Catalyzes the reduction of the glycolytic intermediate dihydroxyacetone phosphate (DHAP) to sn-glycerol 3-phosphate (G3P), the key precursor for phospholipid synthesis.</text>
</comment>
<comment type="catalytic activity">
    <reaction evidence="1">
        <text>sn-glycerol 3-phosphate + NAD(+) = dihydroxyacetone phosphate + NADH + H(+)</text>
        <dbReference type="Rhea" id="RHEA:11092"/>
        <dbReference type="ChEBI" id="CHEBI:15378"/>
        <dbReference type="ChEBI" id="CHEBI:57540"/>
        <dbReference type="ChEBI" id="CHEBI:57597"/>
        <dbReference type="ChEBI" id="CHEBI:57642"/>
        <dbReference type="ChEBI" id="CHEBI:57945"/>
        <dbReference type="EC" id="1.1.1.94"/>
    </reaction>
    <physiologicalReaction direction="right-to-left" evidence="1">
        <dbReference type="Rhea" id="RHEA:11094"/>
    </physiologicalReaction>
</comment>
<comment type="catalytic activity">
    <reaction evidence="1">
        <text>sn-glycerol 3-phosphate + NADP(+) = dihydroxyacetone phosphate + NADPH + H(+)</text>
        <dbReference type="Rhea" id="RHEA:11096"/>
        <dbReference type="ChEBI" id="CHEBI:15378"/>
        <dbReference type="ChEBI" id="CHEBI:57597"/>
        <dbReference type="ChEBI" id="CHEBI:57642"/>
        <dbReference type="ChEBI" id="CHEBI:57783"/>
        <dbReference type="ChEBI" id="CHEBI:58349"/>
        <dbReference type="EC" id="1.1.1.94"/>
    </reaction>
    <physiologicalReaction direction="right-to-left" evidence="1">
        <dbReference type="Rhea" id="RHEA:11098"/>
    </physiologicalReaction>
</comment>
<comment type="pathway">
    <text evidence="1">Membrane lipid metabolism; glycerophospholipid metabolism.</text>
</comment>
<comment type="subcellular location">
    <subcellularLocation>
        <location evidence="1">Cytoplasm</location>
    </subcellularLocation>
</comment>
<comment type="similarity">
    <text evidence="1">Belongs to the NAD-dependent glycerol-3-phosphate dehydrogenase family.</text>
</comment>
<reference key="1">
    <citation type="journal article" date="2002" name="Nucleic Acids Res.">
        <title>Genome sequence of Oceanobacillus iheyensis isolated from the Iheya Ridge and its unexpected adaptive capabilities to extreme environments.</title>
        <authorList>
            <person name="Takami H."/>
            <person name="Takaki Y."/>
            <person name="Uchiyama I."/>
        </authorList>
    </citation>
    <scope>NUCLEOTIDE SEQUENCE [LARGE SCALE GENOMIC DNA]</scope>
    <source>
        <strain>DSM 14371 / CIP 107618 / JCM 11309 / KCTC 3954 / HTE831</strain>
    </source>
</reference>
<keyword id="KW-0963">Cytoplasm</keyword>
<keyword id="KW-0444">Lipid biosynthesis</keyword>
<keyword id="KW-0443">Lipid metabolism</keyword>
<keyword id="KW-0520">NAD</keyword>
<keyword id="KW-0521">NADP</keyword>
<keyword id="KW-0547">Nucleotide-binding</keyword>
<keyword id="KW-0560">Oxidoreductase</keyword>
<keyword id="KW-0594">Phospholipid biosynthesis</keyword>
<keyword id="KW-1208">Phospholipid metabolism</keyword>
<keyword id="KW-1185">Reference proteome</keyword>
<sequence length="344" mass="37534">MEKVAVLGAGSWGTALAIVLADNGHEVRLWSHRKEHAETINETHRNHKYLDVDIPNEITAYSDMHQTVSGVDAVVIVVPTKAIREVCSELNKWMDSKTTVIHATKGIEPVSLKRVSEMIEEEMDIKYEDIVVLSGPSHAEEVALRHPTTVTTSSINLEKAKHAQDLFSSDSFRVYTSDDILGIELGGALKNIIALGAGISDGLGFGDNAKAALITRGLAEIARLGTSLGANPLSFLGLSGVGDLIVTCTSVHSRNWRAGNLLGKGNQLEDVLEQMGMVVEGVRTVKAAHQFAKDQNVDMPITSGIFQILFENKNPKDVVEQLMNRGKRDEMDDLAVLLKERYSE</sequence>
<organism>
    <name type="scientific">Oceanobacillus iheyensis (strain DSM 14371 / CIP 107618 / JCM 11309 / KCTC 3954 / HTE831)</name>
    <dbReference type="NCBI Taxonomy" id="221109"/>
    <lineage>
        <taxon>Bacteria</taxon>
        <taxon>Bacillati</taxon>
        <taxon>Bacillota</taxon>
        <taxon>Bacilli</taxon>
        <taxon>Bacillales</taxon>
        <taxon>Bacillaceae</taxon>
        <taxon>Oceanobacillus</taxon>
    </lineage>
</organism>
<protein>
    <recommendedName>
        <fullName evidence="1">Glycerol-3-phosphate dehydrogenase [NAD(P)+]</fullName>
        <ecNumber evidence="1">1.1.1.94</ecNumber>
    </recommendedName>
    <alternativeName>
        <fullName evidence="1">NAD(P)(+)-dependent glycerol-3-phosphate dehydrogenase</fullName>
    </alternativeName>
    <alternativeName>
        <fullName evidence="1">NAD(P)H-dependent dihydroxyacetone-phosphate reductase</fullName>
    </alternativeName>
</protein>
<accession>Q8EQA9</accession>
<gene>
    <name evidence="1" type="primary">gpsA</name>
    <name type="ordered locus">OB1796</name>
</gene>